<name>GSA_PSYWF</name>
<feature type="chain" id="PRO_0000382361" description="Glutamate-1-semialdehyde 2,1-aminomutase">
    <location>
        <begin position="1"/>
        <end position="434"/>
    </location>
</feature>
<feature type="modified residue" description="N6-(pyridoxal phosphate)lysine" evidence="1">
    <location>
        <position position="266"/>
    </location>
</feature>
<proteinExistence type="inferred from homology"/>
<dbReference type="EC" id="5.4.3.8" evidence="1"/>
<dbReference type="EMBL" id="CP000713">
    <property type="protein sequence ID" value="ABQ93285.1"/>
    <property type="status" value="ALT_INIT"/>
    <property type="molecule type" value="Genomic_DNA"/>
</dbReference>
<dbReference type="SMR" id="A5WC94"/>
<dbReference type="STRING" id="349106.PsycPRwf_0330"/>
<dbReference type="KEGG" id="prw:PsycPRwf_0330"/>
<dbReference type="eggNOG" id="COG0001">
    <property type="taxonomic scope" value="Bacteria"/>
</dbReference>
<dbReference type="HOGENOM" id="CLU_016922_1_5_6"/>
<dbReference type="UniPathway" id="UPA00251">
    <property type="reaction ID" value="UER00317"/>
</dbReference>
<dbReference type="GO" id="GO:0005737">
    <property type="term" value="C:cytoplasm"/>
    <property type="evidence" value="ECO:0007669"/>
    <property type="project" value="UniProtKB-SubCell"/>
</dbReference>
<dbReference type="GO" id="GO:0042286">
    <property type="term" value="F:glutamate-1-semialdehyde 2,1-aminomutase activity"/>
    <property type="evidence" value="ECO:0007669"/>
    <property type="project" value="UniProtKB-UniRule"/>
</dbReference>
<dbReference type="GO" id="GO:0030170">
    <property type="term" value="F:pyridoxal phosphate binding"/>
    <property type="evidence" value="ECO:0007669"/>
    <property type="project" value="InterPro"/>
</dbReference>
<dbReference type="GO" id="GO:0008483">
    <property type="term" value="F:transaminase activity"/>
    <property type="evidence" value="ECO:0007669"/>
    <property type="project" value="InterPro"/>
</dbReference>
<dbReference type="GO" id="GO:0006782">
    <property type="term" value="P:protoporphyrinogen IX biosynthetic process"/>
    <property type="evidence" value="ECO:0007669"/>
    <property type="project" value="UniProtKB-UniRule"/>
</dbReference>
<dbReference type="CDD" id="cd00610">
    <property type="entry name" value="OAT_like"/>
    <property type="match status" value="1"/>
</dbReference>
<dbReference type="FunFam" id="3.40.640.10:FF:000021">
    <property type="entry name" value="Glutamate-1-semialdehyde 2,1-aminomutase"/>
    <property type="match status" value="1"/>
</dbReference>
<dbReference type="Gene3D" id="3.90.1150.10">
    <property type="entry name" value="Aspartate Aminotransferase, domain 1"/>
    <property type="match status" value="1"/>
</dbReference>
<dbReference type="Gene3D" id="3.40.640.10">
    <property type="entry name" value="Type I PLP-dependent aspartate aminotransferase-like (Major domain)"/>
    <property type="match status" value="1"/>
</dbReference>
<dbReference type="HAMAP" id="MF_00375">
    <property type="entry name" value="HemL_aminotrans_3"/>
    <property type="match status" value="1"/>
</dbReference>
<dbReference type="InterPro" id="IPR004639">
    <property type="entry name" value="4pyrrol_synth_GluAld_NH2Trfase"/>
</dbReference>
<dbReference type="InterPro" id="IPR005814">
    <property type="entry name" value="Aminotrans_3"/>
</dbReference>
<dbReference type="InterPro" id="IPR049704">
    <property type="entry name" value="Aminotrans_3_PPA_site"/>
</dbReference>
<dbReference type="InterPro" id="IPR015424">
    <property type="entry name" value="PyrdxlP-dep_Trfase"/>
</dbReference>
<dbReference type="InterPro" id="IPR015421">
    <property type="entry name" value="PyrdxlP-dep_Trfase_major"/>
</dbReference>
<dbReference type="InterPro" id="IPR015422">
    <property type="entry name" value="PyrdxlP-dep_Trfase_small"/>
</dbReference>
<dbReference type="NCBIfam" id="TIGR00713">
    <property type="entry name" value="hemL"/>
    <property type="match status" value="1"/>
</dbReference>
<dbReference type="NCBIfam" id="NF000818">
    <property type="entry name" value="PRK00062.1"/>
    <property type="match status" value="1"/>
</dbReference>
<dbReference type="PANTHER" id="PTHR43713">
    <property type="entry name" value="GLUTAMATE-1-SEMIALDEHYDE 2,1-AMINOMUTASE"/>
    <property type="match status" value="1"/>
</dbReference>
<dbReference type="PANTHER" id="PTHR43713:SF3">
    <property type="entry name" value="GLUTAMATE-1-SEMIALDEHYDE 2,1-AMINOMUTASE 1, CHLOROPLASTIC-RELATED"/>
    <property type="match status" value="1"/>
</dbReference>
<dbReference type="Pfam" id="PF00202">
    <property type="entry name" value="Aminotran_3"/>
    <property type="match status" value="1"/>
</dbReference>
<dbReference type="SUPFAM" id="SSF53383">
    <property type="entry name" value="PLP-dependent transferases"/>
    <property type="match status" value="1"/>
</dbReference>
<dbReference type="PROSITE" id="PS00600">
    <property type="entry name" value="AA_TRANSFER_CLASS_3"/>
    <property type="match status" value="1"/>
</dbReference>
<reference key="1">
    <citation type="submission" date="2007-05" db="EMBL/GenBank/DDBJ databases">
        <title>Complete sequence of chromosome of Psychrobacter sp. PRwf-1.</title>
        <authorList>
            <consortium name="US DOE Joint Genome Institute"/>
            <person name="Copeland A."/>
            <person name="Lucas S."/>
            <person name="Lapidus A."/>
            <person name="Barry K."/>
            <person name="Detter J.C."/>
            <person name="Glavina del Rio T."/>
            <person name="Hammon N."/>
            <person name="Israni S."/>
            <person name="Dalin E."/>
            <person name="Tice H."/>
            <person name="Pitluck S."/>
            <person name="Chain P."/>
            <person name="Malfatti S."/>
            <person name="Shin M."/>
            <person name="Vergez L."/>
            <person name="Schmutz J."/>
            <person name="Larimer F."/>
            <person name="Land M."/>
            <person name="Hauser L."/>
            <person name="Kyrpides N."/>
            <person name="Kim E."/>
            <person name="Tiedje J."/>
            <person name="Richardson P."/>
        </authorList>
    </citation>
    <scope>NUCLEOTIDE SEQUENCE [LARGE SCALE GENOMIC DNA]</scope>
    <source>
        <strain>PRwf-1</strain>
    </source>
</reference>
<organism>
    <name type="scientific">Psychrobacter sp. (strain PRwf-1)</name>
    <dbReference type="NCBI Taxonomy" id="349106"/>
    <lineage>
        <taxon>Bacteria</taxon>
        <taxon>Pseudomonadati</taxon>
        <taxon>Pseudomonadota</taxon>
        <taxon>Gammaproteobacteria</taxon>
        <taxon>Moraxellales</taxon>
        <taxon>Moraxellaceae</taxon>
        <taxon>Psychrobacter</taxon>
    </lineage>
</organism>
<accession>A5WC94</accession>
<comment type="catalytic activity">
    <reaction evidence="1">
        <text>(S)-4-amino-5-oxopentanoate = 5-aminolevulinate</text>
        <dbReference type="Rhea" id="RHEA:14265"/>
        <dbReference type="ChEBI" id="CHEBI:57501"/>
        <dbReference type="ChEBI" id="CHEBI:356416"/>
        <dbReference type="EC" id="5.4.3.8"/>
    </reaction>
</comment>
<comment type="cofactor">
    <cofactor evidence="1">
        <name>pyridoxal 5'-phosphate</name>
        <dbReference type="ChEBI" id="CHEBI:597326"/>
    </cofactor>
</comment>
<comment type="pathway">
    <text evidence="1">Porphyrin-containing compound metabolism; protoporphyrin-IX biosynthesis; 5-aminolevulinate from L-glutamyl-tRNA(Glu): step 2/2.</text>
</comment>
<comment type="subunit">
    <text evidence="1">Homodimer.</text>
</comment>
<comment type="subcellular location">
    <subcellularLocation>
        <location evidence="1">Cytoplasm</location>
    </subcellularLocation>
</comment>
<comment type="similarity">
    <text evidence="1">Belongs to the class-III pyridoxal-phosphate-dependent aminotransferase family. HemL subfamily.</text>
</comment>
<comment type="sequence caution" evidence="2">
    <conflict type="erroneous initiation">
        <sequence resource="EMBL-CDS" id="ABQ93285"/>
    </conflict>
</comment>
<gene>
    <name evidence="1" type="primary">hemL</name>
    <name type="ordered locus">PsycPRwf_0330</name>
</gene>
<sequence length="434" mass="46402">MSTKNEQLFLQAKKHIPGGVNSPVRAFAGVGGTPVFMHKAAGSKIYDTEDNEYIDYVGSWGPMILGHAHPKVIEAVKAAADDGLSFGTPTTFETSVADIICDIVPSVEMIRMTSSGTEATMSAIRLARGYTGRDKIVKFEGCYHGHSDSLLVKAGSGMLDIGEPTSQGVPADFAKHTITLPYNDPQAIKDCFEKWGDEIACVIVEPIAGNMNMIVPSQEFHDTLRAQCTQGGAVLIFDEVMTGFRVGLKGAQAHFGIEPDLICFGKIIGAGLPVGAFGGKREIMECIAPMGGVYQAGTLSGNPLAMRAGIAMFEDLTVEGFYEGVADKVTYLVEGIQAAAHKHGIKLRSTKLGGMFGLFFVKDEATGVPQNFDEVTACDMDKFNTFFHGMLDRGIYLAPSAYEVGFMSSKHTTEDLDATIKAADDVFAEMSAAS</sequence>
<evidence type="ECO:0000255" key="1">
    <source>
        <dbReference type="HAMAP-Rule" id="MF_00375"/>
    </source>
</evidence>
<evidence type="ECO:0000305" key="2"/>
<keyword id="KW-0963">Cytoplasm</keyword>
<keyword id="KW-0413">Isomerase</keyword>
<keyword id="KW-0627">Porphyrin biosynthesis</keyword>
<keyword id="KW-0663">Pyridoxal phosphate</keyword>
<protein>
    <recommendedName>
        <fullName evidence="1">Glutamate-1-semialdehyde 2,1-aminomutase</fullName>
        <shortName evidence="1">GSA</shortName>
        <ecNumber evidence="1">5.4.3.8</ecNumber>
    </recommendedName>
    <alternativeName>
        <fullName evidence="1">Glutamate-1-semialdehyde aminotransferase</fullName>
        <shortName evidence="1">GSA-AT</shortName>
    </alternativeName>
</protein>